<proteinExistence type="inferred from homology"/>
<reference key="1">
    <citation type="journal article" date="2005" name="Mol. Genet. Genomics">
        <title>Functional constraint and divergence in the G protein family in Caenorhabditis elegans and Caenorhabditis briggsae.</title>
        <authorList>
            <person name="Jovelin R."/>
            <person name="Phillips P.C."/>
        </authorList>
    </citation>
    <scope>NUCLEOTIDE SEQUENCE [GENOMIC DNA]</scope>
    <source>
        <strain>AF16</strain>
    </source>
</reference>
<reference key="2">
    <citation type="journal article" date="2003" name="PLoS Biol.">
        <title>The genome sequence of Caenorhabditis briggsae: a platform for comparative genomics.</title>
        <authorList>
            <person name="Stein L.D."/>
            <person name="Bao Z."/>
            <person name="Blasiar D."/>
            <person name="Blumenthal T."/>
            <person name="Brent M.R."/>
            <person name="Chen N."/>
            <person name="Chinwalla A."/>
            <person name="Clarke L."/>
            <person name="Clee C."/>
            <person name="Coghlan A."/>
            <person name="Coulson A."/>
            <person name="D'Eustachio P."/>
            <person name="Fitch D.H.A."/>
            <person name="Fulton L.A."/>
            <person name="Fulton R.E."/>
            <person name="Griffiths-Jones S."/>
            <person name="Harris T.W."/>
            <person name="Hillier L.W."/>
            <person name="Kamath R."/>
            <person name="Kuwabara P.E."/>
            <person name="Mardis E.R."/>
            <person name="Marra M.A."/>
            <person name="Miner T.L."/>
            <person name="Minx P."/>
            <person name="Mullikin J.C."/>
            <person name="Plumb R.W."/>
            <person name="Rogers J."/>
            <person name="Schein J.E."/>
            <person name="Sohrmann M."/>
            <person name="Spieth J."/>
            <person name="Stajich J.E."/>
            <person name="Wei C."/>
            <person name="Willey D."/>
            <person name="Wilson R.K."/>
            <person name="Durbin R.M."/>
            <person name="Waterston R.H."/>
        </authorList>
    </citation>
    <scope>NUCLEOTIDE SEQUENCE [LARGE SCALE GENOMIC DNA]</scope>
    <source>
        <strain>AF16</strain>
    </source>
</reference>
<gene>
    <name type="primary">gpa-2</name>
    <name type="ORF">CBG11277</name>
</gene>
<evidence type="ECO:0000250" key="1">
    <source>
        <dbReference type="UniProtKB" id="P10823"/>
    </source>
</evidence>
<evidence type="ECO:0000250" key="2">
    <source>
        <dbReference type="UniProtKB" id="P18064"/>
    </source>
</evidence>
<evidence type="ECO:0000250" key="3">
    <source>
        <dbReference type="UniProtKB" id="P22454"/>
    </source>
</evidence>
<evidence type="ECO:0000255" key="4">
    <source>
        <dbReference type="PROSITE-ProRule" id="PRU01230"/>
    </source>
</evidence>
<evidence type="ECO:0000256" key="5">
    <source>
        <dbReference type="SAM" id="MobiDB-lite"/>
    </source>
</evidence>
<evidence type="ECO:0000305" key="6"/>
<feature type="initiator methionine" description="Removed" evidence="6">
    <location>
        <position position="1"/>
    </location>
</feature>
<feature type="chain" id="PRO_0000203630" description="Guanine nucleotide-binding protein alpha-2 subunit">
    <location>
        <begin position="2"/>
        <end position="356"/>
    </location>
</feature>
<feature type="domain" description="G-alpha" evidence="4">
    <location>
        <begin position="14"/>
        <end position="338"/>
    </location>
</feature>
<feature type="region of interest" description="Disordered" evidence="5">
    <location>
        <begin position="1"/>
        <end position="25"/>
    </location>
</feature>
<feature type="region of interest" description="G1 motif" evidence="4">
    <location>
        <begin position="17"/>
        <end position="30"/>
    </location>
</feature>
<feature type="region of interest" description="G2 motif" evidence="4">
    <location>
        <begin position="158"/>
        <end position="166"/>
    </location>
</feature>
<feature type="region of interest" description="G3 motif" evidence="4">
    <location>
        <begin position="181"/>
        <end position="190"/>
    </location>
</feature>
<feature type="region of interest" description="G4 motif" evidence="4">
    <location>
        <begin position="250"/>
        <end position="257"/>
    </location>
</feature>
<feature type="region of interest" description="G5 motif" evidence="4">
    <location>
        <begin position="308"/>
        <end position="313"/>
    </location>
</feature>
<feature type="compositionally biased region" description="Basic and acidic residues" evidence="5">
    <location>
        <begin position="7"/>
        <end position="25"/>
    </location>
</feature>
<feature type="binding site" evidence="2">
    <location>
        <position position="25"/>
    </location>
    <ligand>
        <name>GTP</name>
        <dbReference type="ChEBI" id="CHEBI:37565"/>
    </ligand>
</feature>
<feature type="binding site" evidence="2">
    <location>
        <position position="27"/>
    </location>
    <ligand>
        <name>GTP</name>
        <dbReference type="ChEBI" id="CHEBI:37565"/>
    </ligand>
</feature>
<feature type="binding site" evidence="2">
    <location>
        <position position="28"/>
    </location>
    <ligand>
        <name>GTP</name>
        <dbReference type="ChEBI" id="CHEBI:37565"/>
    </ligand>
</feature>
<feature type="binding site" evidence="2">
    <location>
        <position position="29"/>
    </location>
    <ligand>
        <name>GTP</name>
        <dbReference type="ChEBI" id="CHEBI:37565"/>
    </ligand>
</feature>
<feature type="binding site" evidence="2">
    <location>
        <position position="29"/>
    </location>
    <ligand>
        <name>Mg(2+)</name>
        <dbReference type="ChEBI" id="CHEBI:18420"/>
    </ligand>
</feature>
<feature type="binding site" evidence="2">
    <location>
        <position position="30"/>
    </location>
    <ligand>
        <name>GTP</name>
        <dbReference type="ChEBI" id="CHEBI:37565"/>
    </ligand>
</feature>
<feature type="binding site" evidence="2">
    <location>
        <position position="135"/>
    </location>
    <ligand>
        <name>GTP</name>
        <dbReference type="ChEBI" id="CHEBI:37565"/>
    </ligand>
</feature>
<feature type="binding site" evidence="2">
    <location>
        <position position="160"/>
    </location>
    <ligand>
        <name>GTP</name>
        <dbReference type="ChEBI" id="CHEBI:37565"/>
    </ligand>
</feature>
<feature type="binding site" evidence="2">
    <location>
        <position position="166"/>
    </location>
    <ligand>
        <name>GTP</name>
        <dbReference type="ChEBI" id="CHEBI:37565"/>
    </ligand>
</feature>
<feature type="binding site" evidence="2">
    <location>
        <position position="166"/>
    </location>
    <ligand>
        <name>Mg(2+)</name>
        <dbReference type="ChEBI" id="CHEBI:18420"/>
    </ligand>
</feature>
<feature type="binding site" evidence="2">
    <location>
        <position position="188"/>
    </location>
    <ligand>
        <name>GTP</name>
        <dbReference type="ChEBI" id="CHEBI:37565"/>
    </ligand>
</feature>
<feature type="binding site" evidence="2">
    <location>
        <position position="254"/>
    </location>
    <ligand>
        <name>GTP</name>
        <dbReference type="ChEBI" id="CHEBI:37565"/>
    </ligand>
</feature>
<feature type="binding site" evidence="2">
    <location>
        <position position="255"/>
    </location>
    <ligand>
        <name>GTP</name>
        <dbReference type="ChEBI" id="CHEBI:37565"/>
    </ligand>
</feature>
<feature type="binding site" evidence="2">
    <location>
        <position position="257"/>
    </location>
    <ligand>
        <name>GTP</name>
        <dbReference type="ChEBI" id="CHEBI:37565"/>
    </ligand>
</feature>
<feature type="binding site" evidence="2">
    <location>
        <position position="310"/>
    </location>
    <ligand>
        <name>GTP</name>
        <dbReference type="ChEBI" id="CHEBI:37565"/>
    </ligand>
</feature>
<feature type="lipid moiety-binding region" description="N-myristoyl glycine" evidence="1">
    <location>
        <position position="2"/>
    </location>
</feature>
<feature type="lipid moiety-binding region" description="S-palmitoyl cysteine" evidence="1">
    <location>
        <position position="4"/>
    </location>
</feature>
<organism>
    <name type="scientific">Caenorhabditis briggsae</name>
    <dbReference type="NCBI Taxonomy" id="6238"/>
    <lineage>
        <taxon>Eukaryota</taxon>
        <taxon>Metazoa</taxon>
        <taxon>Ecdysozoa</taxon>
        <taxon>Nematoda</taxon>
        <taxon>Chromadorea</taxon>
        <taxon>Rhabditida</taxon>
        <taxon>Rhabditina</taxon>
        <taxon>Rhabditomorpha</taxon>
        <taxon>Rhabditoidea</taxon>
        <taxon>Rhabditidae</taxon>
        <taxon>Peloderinae</taxon>
        <taxon>Caenorhabditis</taxon>
    </lineage>
</organism>
<comment type="function">
    <text evidence="3">Guanine nucleotide-binding proteins (G proteins) are involved as modulators or transducers in various transmembrane signaling systems. Involved in behavioral responses to P.aeruginosa by controlling the expression of daf-7, a member of the TGF-beta family, in ASJ sensory neurons.</text>
</comment>
<comment type="cofactor">
    <cofactor evidence="2">
        <name>Mg(2+)</name>
        <dbReference type="ChEBI" id="CHEBI:18420"/>
    </cofactor>
</comment>
<comment type="subunit">
    <text>G proteins are composed of 3 units; alpha, beta and gamma. The alpha chain contains the guanine nucleotide binding site.</text>
</comment>
<comment type="similarity">
    <text evidence="6">Belongs to the G-alpha family. G(q) subfamily.</text>
</comment>
<comment type="sequence caution" evidence="6">
    <conflict type="erroneous gene model prediction">
        <sequence resource="EMBL-CDS" id="CAP30661"/>
    </conflict>
</comment>
<sequence>MGLCQSEEEKVGSQKSRAIDKEIKQNQSNDERTVKLLLLGAGECGKSTVLKQMRLLTSKTYTADELEAQAKLVFTNIVIEMDHIVKAMPSAHFNFTDPMREHDVHMLTLYIKDMQHKSFHADAAEHVAKLWKDPVIKRLYAERRERNIRDIGDNTEYFFENLDRIAKPDYSPNSMDTLLLRTKTTGIVEVQFEIKKVKFRVFDVGGQRSERKKWIHCFEDVNAIIFIAALSEYNEVLFEDETTNRMIESMRLFESICNSRWFHNTNIILFLNKKDLFEDKIKKENITKAFPEYRGAQNYEETVAFIKQKFEALSNNPKKTFYVHETCATDTNQVQKILDSVISMIIQSNLHKSGLY</sequence>
<protein>
    <recommendedName>
        <fullName>Guanine nucleotide-binding protein alpha-2 subunit</fullName>
    </recommendedName>
</protein>
<accession>Q4VT35</accession>
<accession>A8XDE2</accession>
<accession>Q61GC9</accession>
<name>GPA2_CAEBR</name>
<keyword id="KW-0342">GTP-binding</keyword>
<keyword id="KW-0378">Hydrolase</keyword>
<keyword id="KW-0449">Lipoprotein</keyword>
<keyword id="KW-0460">Magnesium</keyword>
<keyword id="KW-0479">Metal-binding</keyword>
<keyword id="KW-0519">Myristate</keyword>
<keyword id="KW-0547">Nucleotide-binding</keyword>
<keyword id="KW-0564">Palmitate</keyword>
<keyword id="KW-0807">Transducer</keyword>
<dbReference type="EMBL" id="AY634295">
    <property type="protein sequence ID" value="AAW02901.1"/>
    <property type="molecule type" value="Genomic_DNA"/>
</dbReference>
<dbReference type="EMBL" id="CAAC02000500">
    <property type="protein sequence ID" value="CAP30661.4"/>
    <property type="status" value="ALT_SEQ"/>
    <property type="molecule type" value="Genomic_DNA"/>
</dbReference>
<dbReference type="SMR" id="Q4VT35"/>
<dbReference type="WormBase" id="CBG11277">
    <property type="protein sequence ID" value="CBP42726"/>
    <property type="gene ID" value="WBGene00032418"/>
    <property type="gene designation" value="Cbr-gpa-2"/>
</dbReference>
<dbReference type="eggNOG" id="KOG0082">
    <property type="taxonomic scope" value="Eukaryota"/>
</dbReference>
<dbReference type="HOGENOM" id="CLU_014184_6_0_1"/>
<dbReference type="OMA" id="FHNTNII"/>
<dbReference type="GO" id="GO:0031683">
    <property type="term" value="F:G-protein beta/gamma-subunit complex binding"/>
    <property type="evidence" value="ECO:0007669"/>
    <property type="project" value="InterPro"/>
</dbReference>
<dbReference type="GO" id="GO:0005525">
    <property type="term" value="F:GTP binding"/>
    <property type="evidence" value="ECO:0007669"/>
    <property type="project" value="UniProtKB-KW"/>
</dbReference>
<dbReference type="GO" id="GO:0003924">
    <property type="term" value="F:GTPase activity"/>
    <property type="evidence" value="ECO:0007669"/>
    <property type="project" value="InterPro"/>
</dbReference>
<dbReference type="GO" id="GO:0046872">
    <property type="term" value="F:metal ion binding"/>
    <property type="evidence" value="ECO:0007669"/>
    <property type="project" value="UniProtKB-KW"/>
</dbReference>
<dbReference type="GO" id="GO:0007188">
    <property type="term" value="P:adenylate cyclase-modulating G protein-coupled receptor signaling pathway"/>
    <property type="evidence" value="ECO:0007669"/>
    <property type="project" value="InterPro"/>
</dbReference>
<dbReference type="CDD" id="cd00066">
    <property type="entry name" value="G-alpha"/>
    <property type="match status" value="1"/>
</dbReference>
<dbReference type="FunFam" id="1.10.400.10:FF:000011">
    <property type="entry name" value="Guanine nucleotide-binding protein alpha-1 subunit"/>
    <property type="match status" value="1"/>
</dbReference>
<dbReference type="FunFam" id="3.40.50.300:FF:000041">
    <property type="entry name" value="Guanine nucleotide-binding protein G(I) subunit alpha"/>
    <property type="match status" value="1"/>
</dbReference>
<dbReference type="Gene3D" id="1.10.400.10">
    <property type="entry name" value="GI Alpha 1, domain 2-like"/>
    <property type="match status" value="1"/>
</dbReference>
<dbReference type="Gene3D" id="3.40.50.300">
    <property type="entry name" value="P-loop containing nucleotide triphosphate hydrolases"/>
    <property type="match status" value="1"/>
</dbReference>
<dbReference type="InterPro" id="IPR001408">
    <property type="entry name" value="Gprotein_alpha_I"/>
</dbReference>
<dbReference type="InterPro" id="IPR001019">
    <property type="entry name" value="Gprotein_alpha_su"/>
</dbReference>
<dbReference type="InterPro" id="IPR011025">
    <property type="entry name" value="GproteinA_insert"/>
</dbReference>
<dbReference type="InterPro" id="IPR027417">
    <property type="entry name" value="P-loop_NTPase"/>
</dbReference>
<dbReference type="PANTHER" id="PTHR10218">
    <property type="entry name" value="GTP-BINDING PROTEIN ALPHA SUBUNIT"/>
    <property type="match status" value="1"/>
</dbReference>
<dbReference type="PANTHER" id="PTHR10218:SF245">
    <property type="entry name" value="GUANINE NUCLEOTIDE-BINDING PROTEIN ALPHA-2 SUBUNIT-RELATED"/>
    <property type="match status" value="1"/>
</dbReference>
<dbReference type="Pfam" id="PF00503">
    <property type="entry name" value="G-alpha"/>
    <property type="match status" value="1"/>
</dbReference>
<dbReference type="PRINTS" id="PR00318">
    <property type="entry name" value="GPROTEINA"/>
</dbReference>
<dbReference type="PRINTS" id="PR00441">
    <property type="entry name" value="GPROTEINAI"/>
</dbReference>
<dbReference type="SMART" id="SM00275">
    <property type="entry name" value="G_alpha"/>
    <property type="match status" value="1"/>
</dbReference>
<dbReference type="SUPFAM" id="SSF52540">
    <property type="entry name" value="P-loop containing nucleoside triphosphate hydrolases"/>
    <property type="match status" value="1"/>
</dbReference>
<dbReference type="SUPFAM" id="SSF47895">
    <property type="entry name" value="Transducin (alpha subunit), insertion domain"/>
    <property type="match status" value="1"/>
</dbReference>
<dbReference type="PROSITE" id="PS51882">
    <property type="entry name" value="G_ALPHA"/>
    <property type="match status" value="1"/>
</dbReference>